<dbReference type="EMBL" id="CP001396">
    <property type="protein sequence ID" value="ACR62465.1"/>
    <property type="molecule type" value="Genomic_DNA"/>
</dbReference>
<dbReference type="SMR" id="C4ZTM0"/>
<dbReference type="KEGG" id="ebw:BWG_1004"/>
<dbReference type="HOGENOM" id="CLU_155118_1_0_6"/>
<dbReference type="Gene3D" id="3.10.510.20">
    <property type="entry name" value="YcgL domain"/>
    <property type="match status" value="1"/>
</dbReference>
<dbReference type="HAMAP" id="MF_01866">
    <property type="entry name" value="UPF0745"/>
    <property type="match status" value="1"/>
</dbReference>
<dbReference type="InterPro" id="IPR038068">
    <property type="entry name" value="YcgL-like_sf"/>
</dbReference>
<dbReference type="InterPro" id="IPR027354">
    <property type="entry name" value="YcgL_dom"/>
</dbReference>
<dbReference type="PANTHER" id="PTHR38109">
    <property type="entry name" value="PROTEIN YCGL"/>
    <property type="match status" value="1"/>
</dbReference>
<dbReference type="PANTHER" id="PTHR38109:SF1">
    <property type="entry name" value="PROTEIN YCGL"/>
    <property type="match status" value="1"/>
</dbReference>
<dbReference type="Pfam" id="PF05166">
    <property type="entry name" value="YcgL"/>
    <property type="match status" value="1"/>
</dbReference>
<dbReference type="SUPFAM" id="SSF160191">
    <property type="entry name" value="YcgL-like"/>
    <property type="match status" value="1"/>
</dbReference>
<dbReference type="PROSITE" id="PS51648">
    <property type="entry name" value="YCGL"/>
    <property type="match status" value="1"/>
</dbReference>
<gene>
    <name evidence="1" type="primary">ycgL</name>
    <name type="ordered locus">BWG_1004</name>
</gene>
<sequence length="108" mass="12415">MPKPGILKSKSMFCVIYRSSKRDQTYLYVEKKDDFSRVPEELMKGFGQPQLAMILPLDGRKKLVNADIEKVKQALTEQGYYLQLPPPPEDLLKQHLSVMGQKTDDTNK</sequence>
<evidence type="ECO:0000255" key="1">
    <source>
        <dbReference type="HAMAP-Rule" id="MF_01866"/>
    </source>
</evidence>
<organism>
    <name type="scientific">Escherichia coli (strain K12 / MC4100 / BW2952)</name>
    <dbReference type="NCBI Taxonomy" id="595496"/>
    <lineage>
        <taxon>Bacteria</taxon>
        <taxon>Pseudomonadati</taxon>
        <taxon>Pseudomonadota</taxon>
        <taxon>Gammaproteobacteria</taxon>
        <taxon>Enterobacterales</taxon>
        <taxon>Enterobacteriaceae</taxon>
        <taxon>Escherichia</taxon>
    </lineage>
</organism>
<reference key="1">
    <citation type="journal article" date="2009" name="J. Bacteriol.">
        <title>Genomic sequencing reveals regulatory mutations and recombinational events in the widely used MC4100 lineage of Escherichia coli K-12.</title>
        <authorList>
            <person name="Ferenci T."/>
            <person name="Zhou Z."/>
            <person name="Betteridge T."/>
            <person name="Ren Y."/>
            <person name="Liu Y."/>
            <person name="Feng L."/>
            <person name="Reeves P.R."/>
            <person name="Wang L."/>
        </authorList>
    </citation>
    <scope>NUCLEOTIDE SEQUENCE [LARGE SCALE GENOMIC DNA]</scope>
    <source>
        <strain>K12 / MC4100 / BW2952</strain>
    </source>
</reference>
<feature type="chain" id="PRO_1000216161" description="Protein YcgL">
    <location>
        <begin position="1"/>
        <end position="108"/>
    </location>
</feature>
<feature type="domain" description="YcgL" evidence="1">
    <location>
        <begin position="12"/>
        <end position="96"/>
    </location>
</feature>
<name>YCGL_ECOBW</name>
<accession>C4ZTM0</accession>
<proteinExistence type="inferred from homology"/>
<protein>
    <recommendedName>
        <fullName evidence="1">Protein YcgL</fullName>
    </recommendedName>
</protein>